<protein>
    <recommendedName>
        <fullName>Weak neurotoxin 10</fullName>
        <shortName>Wntx-10</shortName>
    </recommendedName>
</protein>
<gene>
    <name type="primary">WNTX10</name>
</gene>
<evidence type="ECO:0000250" key="1"/>
<evidence type="ECO:0000250" key="2">
    <source>
        <dbReference type="UniProtKB" id="O42255"/>
    </source>
</evidence>
<evidence type="ECO:0000250" key="3">
    <source>
        <dbReference type="UniProtKB" id="Q8AY51"/>
    </source>
</evidence>
<evidence type="ECO:0000305" key="4"/>
<accession>Q802B2</accession>
<sequence length="86" mass="9920">MKTLLLTLVVVTIVCLDLGYTLTCLNCPEVFCKKFQTCRNGEKICFKKFDERKLFGKRYRRGCAATCPEAKPREIVQCCSTDRCNR</sequence>
<reference key="1">
    <citation type="journal article" date="2003" name="FEBS Lett.">
        <title>Structurally conserved alpha-neurotoxin genes encode functionally diverse proteins in the venom of Naja sputatrix.</title>
        <authorList>
            <person name="Jeyaseelan K."/>
            <person name="Poh S.L."/>
            <person name="Nair R."/>
            <person name="Armugam A."/>
        </authorList>
    </citation>
    <scope>NUCLEOTIDE SEQUENCE [GENOMIC DNA]</scope>
    <source>
        <tissue>Venom gland</tissue>
    </source>
</reference>
<proteinExistence type="inferred from homology"/>
<organism>
    <name type="scientific">Naja sputatrix</name>
    <name type="common">Malayan spitting cobra</name>
    <name type="synonym">Naja naja sputatrix</name>
    <dbReference type="NCBI Taxonomy" id="33626"/>
    <lineage>
        <taxon>Eukaryota</taxon>
        <taxon>Metazoa</taxon>
        <taxon>Chordata</taxon>
        <taxon>Craniata</taxon>
        <taxon>Vertebrata</taxon>
        <taxon>Euteleostomi</taxon>
        <taxon>Lepidosauria</taxon>
        <taxon>Squamata</taxon>
        <taxon>Bifurcata</taxon>
        <taxon>Unidentata</taxon>
        <taxon>Episquamata</taxon>
        <taxon>Toxicofera</taxon>
        <taxon>Serpentes</taxon>
        <taxon>Colubroidea</taxon>
        <taxon>Elapidae</taxon>
        <taxon>Elapinae</taxon>
        <taxon>Naja</taxon>
    </lineage>
</organism>
<feature type="signal peptide" evidence="1">
    <location>
        <begin position="1"/>
        <end position="21"/>
    </location>
</feature>
<feature type="chain" id="PRO_0000035479" description="Weak neurotoxin 10">
    <location>
        <begin position="22"/>
        <end position="86"/>
    </location>
</feature>
<feature type="disulfide bond" evidence="3">
    <location>
        <begin position="24"/>
        <end position="45"/>
    </location>
</feature>
<feature type="disulfide bond" evidence="3">
    <location>
        <begin position="27"/>
        <end position="32"/>
    </location>
</feature>
<feature type="disulfide bond" evidence="3">
    <location>
        <begin position="38"/>
        <end position="63"/>
    </location>
</feature>
<feature type="disulfide bond" evidence="3">
    <location>
        <begin position="67"/>
        <end position="78"/>
    </location>
</feature>
<feature type="disulfide bond" evidence="3">
    <location>
        <begin position="79"/>
        <end position="84"/>
    </location>
</feature>
<keyword id="KW-0008">Acetylcholine receptor inhibiting toxin</keyword>
<keyword id="KW-1015">Disulfide bond</keyword>
<keyword id="KW-0872">Ion channel impairing toxin</keyword>
<keyword id="KW-0528">Neurotoxin</keyword>
<keyword id="KW-0629">Postsynaptic neurotoxin</keyword>
<keyword id="KW-0964">Secreted</keyword>
<keyword id="KW-0732">Signal</keyword>
<keyword id="KW-0800">Toxin</keyword>
<comment type="function">
    <text evidence="2">Binds with low affinity to muscular (alpha-1-beta-1-delta-epsilon/CHRNA1-CHRNB1-CHRND-CHRNE) and very low affinity to neuronal (alpha-7/CHRNA7) nicotinic acetylcholine receptor (nAChR).</text>
</comment>
<comment type="subcellular location">
    <subcellularLocation>
        <location evidence="1">Secreted</location>
    </subcellularLocation>
</comment>
<comment type="tissue specificity">
    <text evidence="4">Expressed by the venom gland.</text>
</comment>
<comment type="similarity">
    <text evidence="4">Belongs to the three-finger toxin family. Ancestral subfamily. Orphan group II sub-subfamily.</text>
</comment>
<dbReference type="EMBL" id="AY081762">
    <property type="protein sequence ID" value="AAL87468.1"/>
    <property type="molecule type" value="Genomic_DNA"/>
</dbReference>
<dbReference type="SMR" id="Q802B2"/>
<dbReference type="GO" id="GO:0005576">
    <property type="term" value="C:extracellular region"/>
    <property type="evidence" value="ECO:0007669"/>
    <property type="project" value="UniProtKB-SubCell"/>
</dbReference>
<dbReference type="GO" id="GO:0030550">
    <property type="term" value="F:acetylcholine receptor inhibitor activity"/>
    <property type="evidence" value="ECO:0007669"/>
    <property type="project" value="UniProtKB-KW"/>
</dbReference>
<dbReference type="GO" id="GO:0099106">
    <property type="term" value="F:ion channel regulator activity"/>
    <property type="evidence" value="ECO:0007669"/>
    <property type="project" value="UniProtKB-KW"/>
</dbReference>
<dbReference type="GO" id="GO:0090729">
    <property type="term" value="F:toxin activity"/>
    <property type="evidence" value="ECO:0007669"/>
    <property type="project" value="UniProtKB-KW"/>
</dbReference>
<dbReference type="CDD" id="cd00206">
    <property type="entry name" value="TFP_snake_toxin"/>
    <property type="match status" value="1"/>
</dbReference>
<dbReference type="FunFam" id="2.10.60.10:FF:000024">
    <property type="entry name" value="Cytotoxin 1"/>
    <property type="match status" value="1"/>
</dbReference>
<dbReference type="Gene3D" id="2.10.60.10">
    <property type="entry name" value="CD59"/>
    <property type="match status" value="1"/>
</dbReference>
<dbReference type="InterPro" id="IPR003571">
    <property type="entry name" value="Snake_3FTx"/>
</dbReference>
<dbReference type="InterPro" id="IPR045860">
    <property type="entry name" value="Snake_toxin-like_sf"/>
</dbReference>
<dbReference type="InterPro" id="IPR018354">
    <property type="entry name" value="Snake_toxin_con_site"/>
</dbReference>
<dbReference type="InterPro" id="IPR054131">
    <property type="entry name" value="Toxin_cobra-type"/>
</dbReference>
<dbReference type="Pfam" id="PF21947">
    <property type="entry name" value="Toxin_cobra-type"/>
    <property type="match status" value="1"/>
</dbReference>
<dbReference type="SUPFAM" id="SSF57302">
    <property type="entry name" value="Snake toxin-like"/>
    <property type="match status" value="1"/>
</dbReference>
<dbReference type="PROSITE" id="PS00272">
    <property type="entry name" value="SNAKE_TOXIN"/>
    <property type="match status" value="1"/>
</dbReference>
<name>3NO2A_NAJSP</name>